<sequence length="230" mass="26026">MEKIRVKEIFDNVYSVDFGDGLKRIATKSLVPGKRVYGEKLVYSDSIEYRIWNPNKSKLGAAIINGLKKMPIKKGEKVLYLGASAGTTPSHVADIAENSLVYALEFAPRIMREFIDSCNERKNLIPVLGDANRPQDYSNIVEKVDVIFEDVAQPNQAEILVKNAKWFLKENGYAMISIKARSVDVTKNPREIFAEQKKILIEGGFEIVDEVNIEPFEKDHMMMVGIWKGN</sequence>
<accession>Q6LZM7</accession>
<keyword id="KW-0489">Methyltransferase</keyword>
<keyword id="KW-1185">Reference proteome</keyword>
<keyword id="KW-0694">RNA-binding</keyword>
<keyword id="KW-0698">rRNA processing</keyword>
<keyword id="KW-0808">Transferase</keyword>
<keyword id="KW-0819">tRNA processing</keyword>
<proteinExistence type="inferred from homology"/>
<feature type="chain" id="PRO_0000148536" description="Fibrillarin-like rRNA/tRNA 2'-O-methyltransferase">
    <location>
        <begin position="1"/>
        <end position="230"/>
    </location>
</feature>
<feature type="binding site" evidence="1">
    <location>
        <begin position="87"/>
        <end position="88"/>
    </location>
    <ligand>
        <name>S-adenosyl-L-methionine</name>
        <dbReference type="ChEBI" id="CHEBI:59789"/>
    </ligand>
</feature>
<feature type="binding site" evidence="1">
    <location>
        <begin position="105"/>
        <end position="106"/>
    </location>
    <ligand>
        <name>S-adenosyl-L-methionine</name>
        <dbReference type="ChEBI" id="CHEBI:59789"/>
    </ligand>
</feature>
<feature type="binding site" evidence="1">
    <location>
        <begin position="130"/>
        <end position="131"/>
    </location>
    <ligand>
        <name>S-adenosyl-L-methionine</name>
        <dbReference type="ChEBI" id="CHEBI:59789"/>
    </ligand>
</feature>
<feature type="binding site" evidence="1">
    <location>
        <begin position="150"/>
        <end position="153"/>
    </location>
    <ligand>
        <name>S-adenosyl-L-methionine</name>
        <dbReference type="ChEBI" id="CHEBI:59789"/>
    </ligand>
</feature>
<organism>
    <name type="scientific">Methanococcus maripaludis (strain DSM 14266 / JCM 13030 / NBRC 101832 / S2 / LL)</name>
    <dbReference type="NCBI Taxonomy" id="267377"/>
    <lineage>
        <taxon>Archaea</taxon>
        <taxon>Methanobacteriati</taxon>
        <taxon>Methanobacteriota</taxon>
        <taxon>Methanomada group</taxon>
        <taxon>Methanococci</taxon>
        <taxon>Methanococcales</taxon>
        <taxon>Methanococcaceae</taxon>
        <taxon>Methanococcus</taxon>
    </lineage>
</organism>
<evidence type="ECO:0000255" key="1">
    <source>
        <dbReference type="HAMAP-Rule" id="MF_00351"/>
    </source>
</evidence>
<comment type="function">
    <text evidence="1">Involved in pre-rRNA and tRNA processing. Utilizes the methyl donor S-adenosyl-L-methionine to catalyze the site-specific 2'-hydroxyl methylation of ribose moieties in rRNA and tRNA. Site specificity is provided by a guide RNA that base pairs with the substrate. Methylation occurs at a characteristic distance from the sequence involved in base pairing with the guide RNA.</text>
</comment>
<comment type="subunit">
    <text evidence="1">Interacts with nop5. Component of box C/D small ribonucleoprotein (sRNP) particles that contain rpl7ae, FlpA and nop5, plus a guide RNA.</text>
</comment>
<comment type="similarity">
    <text evidence="1">Belongs to the methyltransferase superfamily. Fibrillarin family.</text>
</comment>
<protein>
    <recommendedName>
        <fullName evidence="1">Fibrillarin-like rRNA/tRNA 2'-O-methyltransferase</fullName>
        <ecNumber evidence="1">2.1.1.-</ecNumber>
    </recommendedName>
</protein>
<gene>
    <name evidence="1" type="primary">flpA</name>
    <name type="ordered locus">MMP0597</name>
</gene>
<reference key="1">
    <citation type="journal article" date="2004" name="J. Bacteriol.">
        <title>Complete genome sequence of the genetically tractable hydrogenotrophic methanogen Methanococcus maripaludis.</title>
        <authorList>
            <person name="Hendrickson E.L."/>
            <person name="Kaul R."/>
            <person name="Zhou Y."/>
            <person name="Bovee D."/>
            <person name="Chapman P."/>
            <person name="Chung J."/>
            <person name="Conway de Macario E."/>
            <person name="Dodsworth J.A."/>
            <person name="Gillett W."/>
            <person name="Graham D.E."/>
            <person name="Hackett M."/>
            <person name="Haydock A.K."/>
            <person name="Kang A."/>
            <person name="Land M.L."/>
            <person name="Levy R."/>
            <person name="Lie T.J."/>
            <person name="Major T.A."/>
            <person name="Moore B.C."/>
            <person name="Porat I."/>
            <person name="Palmeiri A."/>
            <person name="Rouse G."/>
            <person name="Saenphimmachak C."/>
            <person name="Soell D."/>
            <person name="Van Dien S."/>
            <person name="Wang T."/>
            <person name="Whitman W.B."/>
            <person name="Xia Q."/>
            <person name="Zhang Y."/>
            <person name="Larimer F.W."/>
            <person name="Olson M.V."/>
            <person name="Leigh J.A."/>
        </authorList>
    </citation>
    <scope>NUCLEOTIDE SEQUENCE [LARGE SCALE GENOMIC DNA]</scope>
    <source>
        <strain>DSM 14266 / JCM 13030 / NBRC 101832 / S2 / LL</strain>
    </source>
</reference>
<dbReference type="EC" id="2.1.1.-" evidence="1"/>
<dbReference type="EMBL" id="BX950229">
    <property type="protein sequence ID" value="CAF30153.1"/>
    <property type="molecule type" value="Genomic_DNA"/>
</dbReference>
<dbReference type="RefSeq" id="WP_011170541.1">
    <property type="nucleotide sequence ID" value="NC_005791.1"/>
</dbReference>
<dbReference type="SMR" id="Q6LZM7"/>
<dbReference type="STRING" id="267377.MMP0597"/>
<dbReference type="EnsemblBacteria" id="CAF30153">
    <property type="protein sequence ID" value="CAF30153"/>
    <property type="gene ID" value="MMP0597"/>
</dbReference>
<dbReference type="GeneID" id="2761664"/>
<dbReference type="KEGG" id="mmp:MMP0597"/>
<dbReference type="PATRIC" id="fig|267377.15.peg.611"/>
<dbReference type="eggNOG" id="arCOG00078">
    <property type="taxonomic scope" value="Archaea"/>
</dbReference>
<dbReference type="HOGENOM" id="CLU_059055_2_0_2"/>
<dbReference type="OrthoDB" id="6244at2157"/>
<dbReference type="Proteomes" id="UP000000590">
    <property type="component" value="Chromosome"/>
</dbReference>
<dbReference type="GO" id="GO:1990259">
    <property type="term" value="F:histone H2AQ104 methyltransferase activity"/>
    <property type="evidence" value="ECO:0007669"/>
    <property type="project" value="TreeGrafter"/>
</dbReference>
<dbReference type="GO" id="GO:0003723">
    <property type="term" value="F:RNA binding"/>
    <property type="evidence" value="ECO:0007669"/>
    <property type="project" value="UniProtKB-UniRule"/>
</dbReference>
<dbReference type="GO" id="GO:0008649">
    <property type="term" value="F:rRNA methyltransferase activity"/>
    <property type="evidence" value="ECO:0007669"/>
    <property type="project" value="TreeGrafter"/>
</dbReference>
<dbReference type="GO" id="GO:0000494">
    <property type="term" value="P:box C/D sno(s)RNA 3'-end processing"/>
    <property type="evidence" value="ECO:0007669"/>
    <property type="project" value="TreeGrafter"/>
</dbReference>
<dbReference type="GO" id="GO:0008033">
    <property type="term" value="P:tRNA processing"/>
    <property type="evidence" value="ECO:0007669"/>
    <property type="project" value="UniProtKB-UniRule"/>
</dbReference>
<dbReference type="CDD" id="cd02440">
    <property type="entry name" value="AdoMet_MTases"/>
    <property type="match status" value="1"/>
</dbReference>
<dbReference type="FunFam" id="3.30.200.20:FF:000613">
    <property type="entry name" value="Fibrillarin-like rRNA/tRNA 2'-O-methyltransferase"/>
    <property type="match status" value="1"/>
</dbReference>
<dbReference type="Gene3D" id="3.30.200.20">
    <property type="entry name" value="Phosphorylase Kinase, domain 1"/>
    <property type="match status" value="1"/>
</dbReference>
<dbReference type="Gene3D" id="3.40.50.150">
    <property type="entry name" value="Vaccinia Virus protein VP39"/>
    <property type="match status" value="1"/>
</dbReference>
<dbReference type="HAMAP" id="MF_00351">
    <property type="entry name" value="RNA_methyltransf_FlpA"/>
    <property type="match status" value="1"/>
</dbReference>
<dbReference type="InterPro" id="IPR000692">
    <property type="entry name" value="Fibrillarin"/>
</dbReference>
<dbReference type="InterPro" id="IPR020813">
    <property type="entry name" value="Fibrillarin_CS"/>
</dbReference>
<dbReference type="InterPro" id="IPR029063">
    <property type="entry name" value="SAM-dependent_MTases_sf"/>
</dbReference>
<dbReference type="NCBIfam" id="NF003276">
    <property type="entry name" value="PRK04266.1-2"/>
    <property type="match status" value="1"/>
</dbReference>
<dbReference type="NCBIfam" id="NF003277">
    <property type="entry name" value="PRK04266.1-3"/>
    <property type="match status" value="1"/>
</dbReference>
<dbReference type="NCBIfam" id="NF003279">
    <property type="entry name" value="PRK04266.1-5"/>
    <property type="match status" value="1"/>
</dbReference>
<dbReference type="PANTHER" id="PTHR10335:SF17">
    <property type="entry name" value="FIBRILLARIN"/>
    <property type="match status" value="1"/>
</dbReference>
<dbReference type="PANTHER" id="PTHR10335">
    <property type="entry name" value="RRNA 2-O-METHYLTRANSFERASE FIBRILLARIN"/>
    <property type="match status" value="1"/>
</dbReference>
<dbReference type="Pfam" id="PF01269">
    <property type="entry name" value="Fibrillarin"/>
    <property type="match status" value="1"/>
</dbReference>
<dbReference type="PIRSF" id="PIRSF006540">
    <property type="entry name" value="Nop17p"/>
    <property type="match status" value="1"/>
</dbReference>
<dbReference type="PRINTS" id="PR00052">
    <property type="entry name" value="FIBRILLARIN"/>
</dbReference>
<dbReference type="SMART" id="SM01206">
    <property type="entry name" value="Fibrillarin"/>
    <property type="match status" value="1"/>
</dbReference>
<dbReference type="SUPFAM" id="SSF53335">
    <property type="entry name" value="S-adenosyl-L-methionine-dependent methyltransferases"/>
    <property type="match status" value="1"/>
</dbReference>
<dbReference type="PROSITE" id="PS00566">
    <property type="entry name" value="FIBRILLARIN"/>
    <property type="match status" value="1"/>
</dbReference>
<name>FLPA_METMP</name>